<name>RL19_XANCB</name>
<accession>B0RXD6</accession>
<gene>
    <name evidence="1" type="primary">rplS</name>
    <name type="ordered locus">xcc-b100_3137</name>
</gene>
<keyword id="KW-0687">Ribonucleoprotein</keyword>
<keyword id="KW-0689">Ribosomal protein</keyword>
<protein>
    <recommendedName>
        <fullName evidence="1">Large ribosomal subunit protein bL19</fullName>
    </recommendedName>
    <alternativeName>
        <fullName evidence="2">50S ribosomal protein L19</fullName>
    </alternativeName>
</protein>
<reference key="1">
    <citation type="journal article" date="2008" name="J. Biotechnol.">
        <title>The genome of Xanthomonas campestris pv. campestris B100 and its use for the reconstruction of metabolic pathways involved in xanthan biosynthesis.</title>
        <authorList>
            <person name="Vorhoelter F.-J."/>
            <person name="Schneiker S."/>
            <person name="Goesmann A."/>
            <person name="Krause L."/>
            <person name="Bekel T."/>
            <person name="Kaiser O."/>
            <person name="Linke B."/>
            <person name="Patschkowski T."/>
            <person name="Rueckert C."/>
            <person name="Schmid J."/>
            <person name="Sidhu V.K."/>
            <person name="Sieber V."/>
            <person name="Tauch A."/>
            <person name="Watt S.A."/>
            <person name="Weisshaar B."/>
            <person name="Becker A."/>
            <person name="Niehaus K."/>
            <person name="Puehler A."/>
        </authorList>
    </citation>
    <scope>NUCLEOTIDE SEQUENCE [LARGE SCALE GENOMIC DNA]</scope>
    <source>
        <strain>B100</strain>
    </source>
</reference>
<sequence length="135" mass="14738">MSKLNKTILADFEAAQIQRQLPEFNQGDTVVVNVKVKEGNRERVQAYEGVVIGTKNAGLNSAFTVRKISHGFGVERVFQTHSAIIDSVEVKRRGKVRAGKLYYLRGLEGKAARIKEDLAAAAQAKAARQAAAKAE</sequence>
<feature type="chain" id="PRO_1000193922" description="Large ribosomal subunit protein bL19">
    <location>
        <begin position="1"/>
        <end position="135"/>
    </location>
</feature>
<proteinExistence type="inferred from homology"/>
<comment type="function">
    <text evidence="1">This protein is located at the 30S-50S ribosomal subunit interface and may play a role in the structure and function of the aminoacyl-tRNA binding site.</text>
</comment>
<comment type="similarity">
    <text evidence="1">Belongs to the bacterial ribosomal protein bL19 family.</text>
</comment>
<dbReference type="EMBL" id="AM920689">
    <property type="protein sequence ID" value="CAP52502.1"/>
    <property type="molecule type" value="Genomic_DNA"/>
</dbReference>
<dbReference type="SMR" id="B0RXD6"/>
<dbReference type="KEGG" id="xca:xcc-b100_3137"/>
<dbReference type="HOGENOM" id="CLU_103507_2_1_6"/>
<dbReference type="Proteomes" id="UP000001188">
    <property type="component" value="Chromosome"/>
</dbReference>
<dbReference type="GO" id="GO:0022625">
    <property type="term" value="C:cytosolic large ribosomal subunit"/>
    <property type="evidence" value="ECO:0007669"/>
    <property type="project" value="TreeGrafter"/>
</dbReference>
<dbReference type="GO" id="GO:0003735">
    <property type="term" value="F:structural constituent of ribosome"/>
    <property type="evidence" value="ECO:0007669"/>
    <property type="project" value="InterPro"/>
</dbReference>
<dbReference type="GO" id="GO:0006412">
    <property type="term" value="P:translation"/>
    <property type="evidence" value="ECO:0007669"/>
    <property type="project" value="UniProtKB-UniRule"/>
</dbReference>
<dbReference type="FunFam" id="2.30.30.790:FF:000001">
    <property type="entry name" value="50S ribosomal protein L19"/>
    <property type="match status" value="1"/>
</dbReference>
<dbReference type="Gene3D" id="2.30.30.790">
    <property type="match status" value="1"/>
</dbReference>
<dbReference type="HAMAP" id="MF_00402">
    <property type="entry name" value="Ribosomal_bL19"/>
    <property type="match status" value="1"/>
</dbReference>
<dbReference type="InterPro" id="IPR001857">
    <property type="entry name" value="Ribosomal_bL19"/>
</dbReference>
<dbReference type="InterPro" id="IPR018257">
    <property type="entry name" value="Ribosomal_bL19_CS"/>
</dbReference>
<dbReference type="InterPro" id="IPR038657">
    <property type="entry name" value="Ribosomal_bL19_sf"/>
</dbReference>
<dbReference type="InterPro" id="IPR008991">
    <property type="entry name" value="Translation_prot_SH3-like_sf"/>
</dbReference>
<dbReference type="NCBIfam" id="TIGR01024">
    <property type="entry name" value="rplS_bact"/>
    <property type="match status" value="1"/>
</dbReference>
<dbReference type="PANTHER" id="PTHR15680:SF9">
    <property type="entry name" value="LARGE RIBOSOMAL SUBUNIT PROTEIN BL19M"/>
    <property type="match status" value="1"/>
</dbReference>
<dbReference type="PANTHER" id="PTHR15680">
    <property type="entry name" value="RIBOSOMAL PROTEIN L19"/>
    <property type="match status" value="1"/>
</dbReference>
<dbReference type="Pfam" id="PF01245">
    <property type="entry name" value="Ribosomal_L19"/>
    <property type="match status" value="1"/>
</dbReference>
<dbReference type="PIRSF" id="PIRSF002191">
    <property type="entry name" value="Ribosomal_L19"/>
    <property type="match status" value="1"/>
</dbReference>
<dbReference type="PRINTS" id="PR00061">
    <property type="entry name" value="RIBOSOMALL19"/>
</dbReference>
<dbReference type="SUPFAM" id="SSF50104">
    <property type="entry name" value="Translation proteins SH3-like domain"/>
    <property type="match status" value="1"/>
</dbReference>
<dbReference type="PROSITE" id="PS01015">
    <property type="entry name" value="RIBOSOMAL_L19"/>
    <property type="match status" value="1"/>
</dbReference>
<evidence type="ECO:0000255" key="1">
    <source>
        <dbReference type="HAMAP-Rule" id="MF_00402"/>
    </source>
</evidence>
<evidence type="ECO:0000305" key="2"/>
<organism>
    <name type="scientific">Xanthomonas campestris pv. campestris (strain B100)</name>
    <dbReference type="NCBI Taxonomy" id="509169"/>
    <lineage>
        <taxon>Bacteria</taxon>
        <taxon>Pseudomonadati</taxon>
        <taxon>Pseudomonadota</taxon>
        <taxon>Gammaproteobacteria</taxon>
        <taxon>Lysobacterales</taxon>
        <taxon>Lysobacteraceae</taxon>
        <taxon>Xanthomonas</taxon>
    </lineage>
</organism>